<keyword id="KW-0010">Activator</keyword>
<keyword id="KW-0963">Cytoplasm</keyword>
<keyword id="KW-0217">Developmental protein</keyword>
<keyword id="KW-0221">Differentiation</keyword>
<keyword id="KW-0238">DNA-binding</keyword>
<keyword id="KW-0479">Metal-binding</keyword>
<keyword id="KW-0524">Neurogenesis</keyword>
<keyword id="KW-0539">Nucleus</keyword>
<keyword id="KW-1185">Reference proteome</keyword>
<keyword id="KW-0677">Repeat</keyword>
<keyword id="KW-0804">Transcription</keyword>
<keyword id="KW-0805">Transcription regulation</keyword>
<keyword id="KW-0862">Zinc</keyword>
<keyword id="KW-0863">Zinc-finger</keyword>
<proteinExistence type="evidence at protein level"/>
<evidence type="ECO:0000255" key="1">
    <source>
        <dbReference type="PROSITE-ProRule" id="PRU00042"/>
    </source>
</evidence>
<evidence type="ECO:0000256" key="2">
    <source>
        <dbReference type="SAM" id="MobiDB-lite"/>
    </source>
</evidence>
<evidence type="ECO:0000269" key="3">
    <source>
    </source>
</evidence>
<evidence type="ECO:0000269" key="4">
    <source>
    </source>
</evidence>
<evidence type="ECO:0000269" key="5">
    <source>
    </source>
</evidence>
<evidence type="ECO:0000269" key="6">
    <source>
    </source>
</evidence>
<evidence type="ECO:0000269" key="7">
    <source>
    </source>
</evidence>
<evidence type="ECO:0000269" key="8">
    <source>
    </source>
</evidence>
<evidence type="ECO:0000269" key="9">
    <source>
    </source>
</evidence>
<evidence type="ECO:0000305" key="10"/>
<comment type="function">
    <text evidence="3 4 5 6 7 8 9">Acts as a transcriptional activator. Involved in neurogenesis. Plays important roles in the early stage of organogenesis of the CNS, as well as during dorsal spinal cord development and maturation of the cerebellum. Involved in the spatial distribution of mossy fiber (MF) neurons within the pontine gray nucleus (PGN). Plays a role in the regulation of MF axon pathway choice. Promotes MF migration towards ipsilaterally-located cerebellar territories. May have a role in shear flow mechanotransduction in osteocytes. Retains nuclear GLI1 and GLI3 in the cytoplasm. Binds to the minimal GLI-consensus sequence 5'-TGGGTGGTC-3'.</text>
</comment>
<comment type="subunit">
    <text evidence="4 6">Interacts (via the C2H2-type domains 3, 4 and 5) with MDFIC (via the C2H2-type domains 3, 4 and 5). Interacts with GLI1; the interaction enhances transcription activation. Interacts with GLI2. Interacts with GLI3; the interaction enhances transcription activation.</text>
</comment>
<comment type="interaction">
    <interactant intactId="EBI-308006">
        <id>P46684</id>
    </interactant>
    <interactant intactId="EBI-308039">
        <id>Q8K0K3</id>
        <label>Gli2</label>
    </interactant>
    <organismsDiffer>false</organismsDiffer>
    <experiments>2</experiments>
</comment>
<comment type="interaction">
    <interactant intactId="EBI-308006">
        <id>P46684</id>
    </interactant>
    <interactant intactId="EBI-308084">
        <id>P08151</id>
        <label>GLI1</label>
    </interactant>
    <organismsDiffer>true</organismsDiffer>
    <experiments>2</experiments>
</comment>
<comment type="interaction">
    <interactant intactId="EBI-308006">
        <id>P46684</id>
    </interactant>
    <interactant intactId="EBI-308055">
        <id>P10071</id>
        <label>GLI3</label>
    </interactant>
    <organismsDiffer>true</organismsDiffer>
    <experiments>2</experiments>
</comment>
<comment type="subcellular location">
    <subcellularLocation>
        <location>Nucleus</location>
    </subcellularLocation>
    <subcellularLocation>
        <location>Cytoplasm</location>
    </subcellularLocation>
    <text>Localizes in the cytoplasm in presence of MDFIC overexpression.</text>
</comment>
<comment type="tissue specificity">
    <text evidence="7 8 9">Expressed in osteoblasts (at protein level). Expressed in the CNS. A high level expression is seen in the cerebellum, while a low level expression is seen in the olfactory bulb, diencephalon, and brainstem. Expressed in lumbar spine and iliac crest.</text>
</comment>
<comment type="developmental stage">
    <text evidence="5 9">Expressed in progenitor cells in the dorsal third of the ventricular zone at 12.5 dpc. Expressed in newly emerging pontine gray nucleus (PGN) precursor cells of the extramural migratory stream (ems) between 12.5 and 14.5 dpc. Expressed in precerebellar mossy fiber (MF) neurons of the PGN (located either rostromedially or caudolaterally) persisted through at least P8 after birth (at protein level). In the early embryonic stage, it is expressed in the dorsal half of the neural tube and adjacent mesenchyme, and in the developing cerebellum it is expressed persistently in the granule cell lineage throughout the prenatal and postnatal periods.</text>
</comment>
<comment type="domain">
    <text>The C2H2-type 3, 4 and 5 zinc finger domains are necessary for transcription activation.</text>
</comment>
<comment type="disruption phenotype">
    <text evidence="5">Mice show a cell mass decrease of the spinal dorsal horn, hypoplasia and abnormal foliation patterns in the cerebellum.</text>
</comment>
<comment type="similarity">
    <text evidence="10">Belongs to the GLI C2H2-type zinc-finger protein family.</text>
</comment>
<dbReference type="EMBL" id="D32167">
    <property type="protein sequence ID" value="BAA06878.1"/>
    <property type="molecule type" value="mRNA"/>
</dbReference>
<dbReference type="EMBL" id="AK136977">
    <property type="protein sequence ID" value="BAE23194.1"/>
    <property type="molecule type" value="mRNA"/>
</dbReference>
<dbReference type="EMBL" id="CH466560">
    <property type="protein sequence ID" value="EDL20910.1"/>
    <property type="molecule type" value="Genomic_DNA"/>
</dbReference>
<dbReference type="EMBL" id="BC050889">
    <property type="protein sequence ID" value="AAH50889.2"/>
    <property type="molecule type" value="mRNA"/>
</dbReference>
<dbReference type="EMBL" id="BC060247">
    <property type="protein sequence ID" value="AAH60247.1"/>
    <property type="molecule type" value="mRNA"/>
</dbReference>
<dbReference type="EMBL" id="BC063247">
    <property type="protein sequence ID" value="AAH63247.1"/>
    <property type="molecule type" value="mRNA"/>
</dbReference>
<dbReference type="CCDS" id="CCDS23403.1"/>
<dbReference type="PIR" id="I56511">
    <property type="entry name" value="I56511"/>
</dbReference>
<dbReference type="RefSeq" id="NP_001363870.1">
    <property type="nucleotide sequence ID" value="NM_001376941.1"/>
</dbReference>
<dbReference type="RefSeq" id="NP_033599.2">
    <property type="nucleotide sequence ID" value="NM_009573.3"/>
</dbReference>
<dbReference type="RefSeq" id="XP_006511124.1">
    <property type="nucleotide sequence ID" value="XM_006511061.1"/>
</dbReference>
<dbReference type="RefSeq" id="XP_036010740.1">
    <property type="nucleotide sequence ID" value="XM_036154847.1"/>
</dbReference>
<dbReference type="SMR" id="P46684"/>
<dbReference type="BioGRID" id="204694">
    <property type="interactions" value="1"/>
</dbReference>
<dbReference type="FunCoup" id="P46684">
    <property type="interactions" value="2254"/>
</dbReference>
<dbReference type="IntAct" id="P46684">
    <property type="interactions" value="3"/>
</dbReference>
<dbReference type="MINT" id="P46684"/>
<dbReference type="STRING" id="10090.ENSMUSP00000034927"/>
<dbReference type="iPTMnet" id="P46684"/>
<dbReference type="PhosphoSitePlus" id="P46684"/>
<dbReference type="PaxDb" id="10090-ENSMUSP00000034927"/>
<dbReference type="PeptideAtlas" id="P46684"/>
<dbReference type="ProteomicsDB" id="275371"/>
<dbReference type="Antibodypedia" id="1317">
    <property type="antibodies" value="418 antibodies from 34 providers"/>
</dbReference>
<dbReference type="DNASU" id="22771"/>
<dbReference type="Ensembl" id="ENSMUST00000034927.13">
    <property type="protein sequence ID" value="ENSMUSP00000034927.7"/>
    <property type="gene ID" value="ENSMUSG00000032368.15"/>
</dbReference>
<dbReference type="Ensembl" id="ENSMUST00000065360.5">
    <property type="protein sequence ID" value="ENSMUSP00000068858.4"/>
    <property type="gene ID" value="ENSMUSG00000032368.15"/>
</dbReference>
<dbReference type="GeneID" id="22771"/>
<dbReference type="KEGG" id="mmu:22771"/>
<dbReference type="UCSC" id="uc009raf.1">
    <property type="organism name" value="mouse"/>
</dbReference>
<dbReference type="AGR" id="MGI:106683"/>
<dbReference type="CTD" id="7545"/>
<dbReference type="MGI" id="MGI:106683">
    <property type="gene designation" value="Zic1"/>
</dbReference>
<dbReference type="VEuPathDB" id="HostDB:ENSMUSG00000032368"/>
<dbReference type="eggNOG" id="KOG1721">
    <property type="taxonomic scope" value="Eukaryota"/>
</dbReference>
<dbReference type="GeneTree" id="ENSGT00940000160269"/>
<dbReference type="HOGENOM" id="CLU_002678_37_1_1"/>
<dbReference type="InParanoid" id="P46684"/>
<dbReference type="OMA" id="MKVHSKS"/>
<dbReference type="OrthoDB" id="3214149at2759"/>
<dbReference type="PhylomeDB" id="P46684"/>
<dbReference type="TreeFam" id="TF351425"/>
<dbReference type="BioGRID-ORCS" id="22771">
    <property type="hits" value="0 hits in 80 CRISPR screens"/>
</dbReference>
<dbReference type="ChiTaRS" id="Zic1">
    <property type="organism name" value="mouse"/>
</dbReference>
<dbReference type="PRO" id="PR:P46684"/>
<dbReference type="Proteomes" id="UP000000589">
    <property type="component" value="Chromosome 9"/>
</dbReference>
<dbReference type="RNAct" id="P46684">
    <property type="molecule type" value="protein"/>
</dbReference>
<dbReference type="Bgee" id="ENSMUSG00000032368">
    <property type="expression patterns" value="Expressed in habenula and 180 other cell types or tissues"/>
</dbReference>
<dbReference type="GO" id="GO:0005737">
    <property type="term" value="C:cytoplasm"/>
    <property type="evidence" value="ECO:0000314"/>
    <property type="project" value="UniProtKB"/>
</dbReference>
<dbReference type="GO" id="GO:0005654">
    <property type="term" value="C:nucleoplasm"/>
    <property type="evidence" value="ECO:0007669"/>
    <property type="project" value="Ensembl"/>
</dbReference>
<dbReference type="GO" id="GO:0005634">
    <property type="term" value="C:nucleus"/>
    <property type="evidence" value="ECO:0000314"/>
    <property type="project" value="UniProtKB"/>
</dbReference>
<dbReference type="GO" id="GO:0001228">
    <property type="term" value="F:DNA-binding transcription activator activity, RNA polymerase II-specific"/>
    <property type="evidence" value="ECO:0000314"/>
    <property type="project" value="NTNU_SB"/>
</dbReference>
<dbReference type="GO" id="GO:0003700">
    <property type="term" value="F:DNA-binding transcription factor activity"/>
    <property type="evidence" value="ECO:0000314"/>
    <property type="project" value="UniProtKB"/>
</dbReference>
<dbReference type="GO" id="GO:0000978">
    <property type="term" value="F:RNA polymerase II cis-regulatory region sequence-specific DNA binding"/>
    <property type="evidence" value="ECO:0000314"/>
    <property type="project" value="NTNU_SB"/>
</dbReference>
<dbReference type="GO" id="GO:0000977">
    <property type="term" value="F:RNA polymerase II transcription regulatory region sequence-specific DNA binding"/>
    <property type="evidence" value="ECO:0000314"/>
    <property type="project" value="MGI"/>
</dbReference>
<dbReference type="GO" id="GO:0008270">
    <property type="term" value="F:zinc ion binding"/>
    <property type="evidence" value="ECO:0007669"/>
    <property type="project" value="UniProtKB-KW"/>
</dbReference>
<dbReference type="GO" id="GO:0007628">
    <property type="term" value="P:adult walking behavior"/>
    <property type="evidence" value="ECO:0000315"/>
    <property type="project" value="MGI"/>
</dbReference>
<dbReference type="GO" id="GO:0007420">
    <property type="term" value="P:brain development"/>
    <property type="evidence" value="ECO:0000314"/>
    <property type="project" value="UniProtKB"/>
</dbReference>
<dbReference type="GO" id="GO:0030154">
    <property type="term" value="P:cell differentiation"/>
    <property type="evidence" value="ECO:0007669"/>
    <property type="project" value="UniProtKB-KW"/>
</dbReference>
<dbReference type="GO" id="GO:0007417">
    <property type="term" value="P:central nervous system development"/>
    <property type="evidence" value="ECO:0000315"/>
    <property type="project" value="MGI"/>
</dbReference>
<dbReference type="GO" id="GO:0030900">
    <property type="term" value="P:forebrain development"/>
    <property type="evidence" value="ECO:0000316"/>
    <property type="project" value="MGI"/>
</dbReference>
<dbReference type="GO" id="GO:0010467">
    <property type="term" value="P:gene expression"/>
    <property type="evidence" value="ECO:0000314"/>
    <property type="project" value="MGI"/>
</dbReference>
<dbReference type="GO" id="GO:0021766">
    <property type="term" value="P:hippocampus development"/>
    <property type="evidence" value="ECO:0000316"/>
    <property type="project" value="MGI"/>
</dbReference>
<dbReference type="GO" id="GO:0042472">
    <property type="term" value="P:inner ear morphogenesis"/>
    <property type="evidence" value="ECO:0000250"/>
    <property type="project" value="UniProtKB"/>
</dbReference>
<dbReference type="GO" id="GO:0098727">
    <property type="term" value="P:maintenance of cell number"/>
    <property type="evidence" value="ECO:0000316"/>
    <property type="project" value="MGI"/>
</dbReference>
<dbReference type="GO" id="GO:0021772">
    <property type="term" value="P:olfactory bulb development"/>
    <property type="evidence" value="ECO:0000316"/>
    <property type="project" value="MGI"/>
</dbReference>
<dbReference type="GO" id="GO:0007389">
    <property type="term" value="P:pattern specification process"/>
    <property type="evidence" value="ECO:0000314"/>
    <property type="project" value="UniProtKB"/>
</dbReference>
<dbReference type="GO" id="GO:0045893">
    <property type="term" value="P:positive regulation of DNA-templated transcription"/>
    <property type="evidence" value="ECO:0000314"/>
    <property type="project" value="UniProtKB"/>
</dbReference>
<dbReference type="GO" id="GO:0042307">
    <property type="term" value="P:positive regulation of protein import into nucleus"/>
    <property type="evidence" value="ECO:0000314"/>
    <property type="project" value="UniProtKB"/>
</dbReference>
<dbReference type="GO" id="GO:0045944">
    <property type="term" value="P:positive regulation of transcription by RNA polymerase II"/>
    <property type="evidence" value="ECO:0000314"/>
    <property type="project" value="NTNU_SB"/>
</dbReference>
<dbReference type="GO" id="GO:0008589">
    <property type="term" value="P:regulation of smoothened signaling pathway"/>
    <property type="evidence" value="ECO:0000353"/>
    <property type="project" value="UniProtKB"/>
</dbReference>
<dbReference type="GO" id="GO:0001501">
    <property type="term" value="P:skeletal system development"/>
    <property type="evidence" value="ECO:0000303"/>
    <property type="project" value="UniProtKB"/>
</dbReference>
<dbReference type="GO" id="GO:0021510">
    <property type="term" value="P:spinal cord development"/>
    <property type="evidence" value="ECO:0000315"/>
    <property type="project" value="UniProtKB"/>
</dbReference>
<dbReference type="FunFam" id="3.30.160.60:FF:000035">
    <property type="entry name" value="Zinc finger protein ZIC 1"/>
    <property type="match status" value="1"/>
</dbReference>
<dbReference type="FunFam" id="3.30.160.60:FF:000039">
    <property type="entry name" value="Zinc finger protein ZIC 1"/>
    <property type="match status" value="1"/>
</dbReference>
<dbReference type="FunFam" id="3.30.160.60:FF:000041">
    <property type="entry name" value="Zinc finger protein ZIC 1"/>
    <property type="match status" value="1"/>
</dbReference>
<dbReference type="FunFam" id="3.30.160.60:FF:001330">
    <property type="entry name" value="Zinc finger protein ZIC 4"/>
    <property type="match status" value="1"/>
</dbReference>
<dbReference type="Gene3D" id="3.30.160.60">
    <property type="entry name" value="Classic Zinc Finger"/>
    <property type="match status" value="4"/>
</dbReference>
<dbReference type="InterPro" id="IPR043359">
    <property type="entry name" value="GLI-like"/>
</dbReference>
<dbReference type="InterPro" id="IPR056436">
    <property type="entry name" value="Znf-C2H2_ZIC1-5/GLI1-3-like"/>
</dbReference>
<dbReference type="InterPro" id="IPR036236">
    <property type="entry name" value="Znf_C2H2_sf"/>
</dbReference>
<dbReference type="InterPro" id="IPR013087">
    <property type="entry name" value="Znf_C2H2_type"/>
</dbReference>
<dbReference type="InterPro" id="IPR041643">
    <property type="entry name" value="Znf_ZIC"/>
</dbReference>
<dbReference type="PANTHER" id="PTHR45718:SF8">
    <property type="entry name" value="GLIS FAMILY ZINC FINGER 2"/>
    <property type="match status" value="1"/>
</dbReference>
<dbReference type="PANTHER" id="PTHR45718">
    <property type="entry name" value="TRANSCRIPTIONAL ACTIVATOR CUBITUS INTERRUPTUS"/>
    <property type="match status" value="1"/>
</dbReference>
<dbReference type="Pfam" id="PF00096">
    <property type="entry name" value="zf-C2H2"/>
    <property type="match status" value="3"/>
</dbReference>
<dbReference type="Pfam" id="PF23561">
    <property type="entry name" value="zf-C2H2_15"/>
    <property type="match status" value="1"/>
</dbReference>
<dbReference type="Pfam" id="PF18366">
    <property type="entry name" value="zf_ZIC"/>
    <property type="match status" value="1"/>
</dbReference>
<dbReference type="SMART" id="SM00355">
    <property type="entry name" value="ZnF_C2H2"/>
    <property type="match status" value="5"/>
</dbReference>
<dbReference type="SUPFAM" id="SSF57667">
    <property type="entry name" value="beta-beta-alpha zinc fingers"/>
    <property type="match status" value="2"/>
</dbReference>
<dbReference type="PROSITE" id="PS00028">
    <property type="entry name" value="ZINC_FINGER_C2H2_1"/>
    <property type="match status" value="3"/>
</dbReference>
<dbReference type="PROSITE" id="PS50157">
    <property type="entry name" value="ZINC_FINGER_C2H2_2"/>
    <property type="match status" value="4"/>
</dbReference>
<gene>
    <name type="primary">Zic1</name>
    <name type="synonym">Zic</name>
</gene>
<accession>P46684</accession>
<accession>Q6PAK5</accession>
<accession>Q80Y18</accession>
<sequence length="447" mass="48331">MLLDAGPQYPAIGVTTFGASRHHSAGDVAERDVGLGINPFADGMGAFKLNPSSHELASAGQTAFTSQAPGYAAAAALGHHHHPGHVGSYSSAAFNSTRDFLFRNRGFGDAAAAASAQHSLFAASAGGFGGPHGHTDAAGHLLFSGLHEQAAGHASPNVVNGQMRLGFSGDMYPRPEQYGQVTSPRSEHYAAPQLHGYGPMNVNMAAHHGAGAFFRYMRQPIKQELICKWIEPEQLANPKKSCNKTFSTMHELVTHVTVEHVGGPEQSNHICFWEECPREGKPFKAKYKLVNHIRVHTGEKPFPCPFPGCGKVFARSENLKIHKRTHTGEKPFKCEFEGCDRRFANSSDRKKHMHVHTSDKPYLCKMCDKSYTHPSSLRKHMKVHESSSQGSQPSPAASSGYESSTPPTIVSPTTDNPTTSSMSPSSSAVHHTAGHSALSSNFNEWYV</sequence>
<protein>
    <recommendedName>
        <fullName>Zinc finger protein ZIC 1</fullName>
    </recommendedName>
    <alternativeName>
        <fullName>Zinc finger protein of the cerebellum 1</fullName>
    </alternativeName>
</protein>
<feature type="chain" id="PRO_0000047245" description="Zinc finger protein ZIC 1">
    <location>
        <begin position="1"/>
        <end position="447"/>
    </location>
</feature>
<feature type="zinc finger region" description="C2H2-type 1; atypical" evidence="1">
    <location>
        <begin position="225"/>
        <end position="260"/>
    </location>
</feature>
<feature type="zinc finger region" description="C2H2-type 2; atypical" evidence="1">
    <location>
        <begin position="269"/>
        <end position="296"/>
    </location>
</feature>
<feature type="zinc finger region" description="C2H2-type 3" evidence="1">
    <location>
        <begin position="302"/>
        <end position="326"/>
    </location>
</feature>
<feature type="zinc finger region" description="C2H2-type 4" evidence="1">
    <location>
        <begin position="332"/>
        <end position="356"/>
    </location>
</feature>
<feature type="zinc finger region" description="C2H2-type 5" evidence="1">
    <location>
        <begin position="362"/>
        <end position="384"/>
    </location>
</feature>
<feature type="region of interest" description="Disordered" evidence="2">
    <location>
        <begin position="375"/>
        <end position="434"/>
    </location>
</feature>
<feature type="compositionally biased region" description="Low complexity" evidence="2">
    <location>
        <begin position="386"/>
        <end position="427"/>
    </location>
</feature>
<feature type="sequence conflict" description="In Ref. 1; BAA06878." evidence="10" ref="1">
    <original>A</original>
    <variation>R</variation>
    <location>
        <position position="72"/>
    </location>
</feature>
<name>ZIC1_MOUSE</name>
<organism>
    <name type="scientific">Mus musculus</name>
    <name type="common">Mouse</name>
    <dbReference type="NCBI Taxonomy" id="10090"/>
    <lineage>
        <taxon>Eukaryota</taxon>
        <taxon>Metazoa</taxon>
        <taxon>Chordata</taxon>
        <taxon>Craniata</taxon>
        <taxon>Vertebrata</taxon>
        <taxon>Euteleostomi</taxon>
        <taxon>Mammalia</taxon>
        <taxon>Eutheria</taxon>
        <taxon>Euarchontoglires</taxon>
        <taxon>Glires</taxon>
        <taxon>Rodentia</taxon>
        <taxon>Myomorpha</taxon>
        <taxon>Muroidea</taxon>
        <taxon>Muridae</taxon>
        <taxon>Murinae</taxon>
        <taxon>Mus</taxon>
        <taxon>Mus</taxon>
    </lineage>
</organism>
<reference key="1">
    <citation type="journal article" date="1994" name="J. Neurochem.">
        <title>A novel zinc finger protein, zic, is involved in neurogenesis, especially in the cell lineage of cerebellar granule cells.</title>
        <authorList>
            <person name="Aruga J."/>
            <person name="Yokota N."/>
            <person name="Hashimoto M."/>
            <person name="Furuichi T."/>
            <person name="Fukuda M."/>
            <person name="Mikoshiba K."/>
        </authorList>
    </citation>
    <scope>NUCLEOTIDE SEQUENCE [MRNA]</scope>
    <scope>FUNCTION</scope>
    <scope>TISSUE SPECIFICITY</scope>
    <scope>DEVELOPMENTAL STAGE</scope>
    <source>
        <strain>ICR</strain>
        <tissue>Cerebellum</tissue>
    </source>
</reference>
<reference key="2">
    <citation type="journal article" date="2005" name="Science">
        <title>The transcriptional landscape of the mammalian genome.</title>
        <authorList>
            <person name="Carninci P."/>
            <person name="Kasukawa T."/>
            <person name="Katayama S."/>
            <person name="Gough J."/>
            <person name="Frith M.C."/>
            <person name="Maeda N."/>
            <person name="Oyama R."/>
            <person name="Ravasi T."/>
            <person name="Lenhard B."/>
            <person name="Wells C."/>
            <person name="Kodzius R."/>
            <person name="Shimokawa K."/>
            <person name="Bajic V.B."/>
            <person name="Brenner S.E."/>
            <person name="Batalov S."/>
            <person name="Forrest A.R."/>
            <person name="Zavolan M."/>
            <person name="Davis M.J."/>
            <person name="Wilming L.G."/>
            <person name="Aidinis V."/>
            <person name="Allen J.E."/>
            <person name="Ambesi-Impiombato A."/>
            <person name="Apweiler R."/>
            <person name="Aturaliya R.N."/>
            <person name="Bailey T.L."/>
            <person name="Bansal M."/>
            <person name="Baxter L."/>
            <person name="Beisel K.W."/>
            <person name="Bersano T."/>
            <person name="Bono H."/>
            <person name="Chalk A.M."/>
            <person name="Chiu K.P."/>
            <person name="Choudhary V."/>
            <person name="Christoffels A."/>
            <person name="Clutterbuck D.R."/>
            <person name="Crowe M.L."/>
            <person name="Dalla E."/>
            <person name="Dalrymple B.P."/>
            <person name="de Bono B."/>
            <person name="Della Gatta G."/>
            <person name="di Bernardo D."/>
            <person name="Down T."/>
            <person name="Engstrom P."/>
            <person name="Fagiolini M."/>
            <person name="Faulkner G."/>
            <person name="Fletcher C.F."/>
            <person name="Fukushima T."/>
            <person name="Furuno M."/>
            <person name="Futaki S."/>
            <person name="Gariboldi M."/>
            <person name="Georgii-Hemming P."/>
            <person name="Gingeras T.R."/>
            <person name="Gojobori T."/>
            <person name="Green R.E."/>
            <person name="Gustincich S."/>
            <person name="Harbers M."/>
            <person name="Hayashi Y."/>
            <person name="Hensch T.K."/>
            <person name="Hirokawa N."/>
            <person name="Hill D."/>
            <person name="Huminiecki L."/>
            <person name="Iacono M."/>
            <person name="Ikeo K."/>
            <person name="Iwama A."/>
            <person name="Ishikawa T."/>
            <person name="Jakt M."/>
            <person name="Kanapin A."/>
            <person name="Katoh M."/>
            <person name="Kawasawa Y."/>
            <person name="Kelso J."/>
            <person name="Kitamura H."/>
            <person name="Kitano H."/>
            <person name="Kollias G."/>
            <person name="Krishnan S.P."/>
            <person name="Kruger A."/>
            <person name="Kummerfeld S.K."/>
            <person name="Kurochkin I.V."/>
            <person name="Lareau L.F."/>
            <person name="Lazarevic D."/>
            <person name="Lipovich L."/>
            <person name="Liu J."/>
            <person name="Liuni S."/>
            <person name="McWilliam S."/>
            <person name="Madan Babu M."/>
            <person name="Madera M."/>
            <person name="Marchionni L."/>
            <person name="Matsuda H."/>
            <person name="Matsuzawa S."/>
            <person name="Miki H."/>
            <person name="Mignone F."/>
            <person name="Miyake S."/>
            <person name="Morris K."/>
            <person name="Mottagui-Tabar S."/>
            <person name="Mulder N."/>
            <person name="Nakano N."/>
            <person name="Nakauchi H."/>
            <person name="Ng P."/>
            <person name="Nilsson R."/>
            <person name="Nishiguchi S."/>
            <person name="Nishikawa S."/>
            <person name="Nori F."/>
            <person name="Ohara O."/>
            <person name="Okazaki Y."/>
            <person name="Orlando V."/>
            <person name="Pang K.C."/>
            <person name="Pavan W.J."/>
            <person name="Pavesi G."/>
            <person name="Pesole G."/>
            <person name="Petrovsky N."/>
            <person name="Piazza S."/>
            <person name="Reed J."/>
            <person name="Reid J.F."/>
            <person name="Ring B.Z."/>
            <person name="Ringwald M."/>
            <person name="Rost B."/>
            <person name="Ruan Y."/>
            <person name="Salzberg S.L."/>
            <person name="Sandelin A."/>
            <person name="Schneider C."/>
            <person name="Schoenbach C."/>
            <person name="Sekiguchi K."/>
            <person name="Semple C.A."/>
            <person name="Seno S."/>
            <person name="Sessa L."/>
            <person name="Sheng Y."/>
            <person name="Shibata Y."/>
            <person name="Shimada H."/>
            <person name="Shimada K."/>
            <person name="Silva D."/>
            <person name="Sinclair B."/>
            <person name="Sperling S."/>
            <person name="Stupka E."/>
            <person name="Sugiura K."/>
            <person name="Sultana R."/>
            <person name="Takenaka Y."/>
            <person name="Taki K."/>
            <person name="Tammoja K."/>
            <person name="Tan S.L."/>
            <person name="Tang S."/>
            <person name="Taylor M.S."/>
            <person name="Tegner J."/>
            <person name="Teichmann S.A."/>
            <person name="Ueda H.R."/>
            <person name="van Nimwegen E."/>
            <person name="Verardo R."/>
            <person name="Wei C.L."/>
            <person name="Yagi K."/>
            <person name="Yamanishi H."/>
            <person name="Zabarovsky E."/>
            <person name="Zhu S."/>
            <person name="Zimmer A."/>
            <person name="Hide W."/>
            <person name="Bult C."/>
            <person name="Grimmond S.M."/>
            <person name="Teasdale R.D."/>
            <person name="Liu E.T."/>
            <person name="Brusic V."/>
            <person name="Quackenbush J."/>
            <person name="Wahlestedt C."/>
            <person name="Mattick J.S."/>
            <person name="Hume D.A."/>
            <person name="Kai C."/>
            <person name="Sasaki D."/>
            <person name="Tomaru Y."/>
            <person name="Fukuda S."/>
            <person name="Kanamori-Katayama M."/>
            <person name="Suzuki M."/>
            <person name="Aoki J."/>
            <person name="Arakawa T."/>
            <person name="Iida J."/>
            <person name="Imamura K."/>
            <person name="Itoh M."/>
            <person name="Kato T."/>
            <person name="Kawaji H."/>
            <person name="Kawagashira N."/>
            <person name="Kawashima T."/>
            <person name="Kojima M."/>
            <person name="Kondo S."/>
            <person name="Konno H."/>
            <person name="Nakano K."/>
            <person name="Ninomiya N."/>
            <person name="Nishio T."/>
            <person name="Okada M."/>
            <person name="Plessy C."/>
            <person name="Shibata K."/>
            <person name="Shiraki T."/>
            <person name="Suzuki S."/>
            <person name="Tagami M."/>
            <person name="Waki K."/>
            <person name="Watahiki A."/>
            <person name="Okamura-Oho Y."/>
            <person name="Suzuki H."/>
            <person name="Kawai J."/>
            <person name="Hayashizaki Y."/>
        </authorList>
    </citation>
    <scope>NUCLEOTIDE SEQUENCE [LARGE SCALE MRNA]</scope>
    <source>
        <strain>C57BL/6J</strain>
        <tissue>Embryo</tissue>
    </source>
</reference>
<reference key="3">
    <citation type="submission" date="2005-07" db="EMBL/GenBank/DDBJ databases">
        <authorList>
            <person name="Mural R.J."/>
            <person name="Adams M.D."/>
            <person name="Myers E.W."/>
            <person name="Smith H.O."/>
            <person name="Venter J.C."/>
        </authorList>
    </citation>
    <scope>NUCLEOTIDE SEQUENCE [LARGE SCALE GENOMIC DNA]</scope>
</reference>
<reference key="4">
    <citation type="journal article" date="2004" name="Genome Res.">
        <title>The status, quality, and expansion of the NIH full-length cDNA project: the Mammalian Gene Collection (MGC).</title>
        <authorList>
            <consortium name="The MGC Project Team"/>
        </authorList>
    </citation>
    <scope>NUCLEOTIDE SEQUENCE [LARGE SCALE MRNA]</scope>
    <source>
        <strain>C57BL/6J</strain>
        <tissue>Brain</tissue>
    </source>
</reference>
<reference key="5">
    <citation type="journal article" date="2001" name="J. Biol. Chem.">
        <title>Molecular properties of Zic proteins as transcriptional regulators and their relationship to GLI proteins.</title>
        <authorList>
            <person name="Mizugishi K."/>
            <person name="Aruga J."/>
            <person name="Nakata K."/>
            <person name="Mikoshiba K."/>
        </authorList>
    </citation>
    <scope>FUNCTION</scope>
    <scope>DNA-BINDING</scope>
</reference>
<reference key="6">
    <citation type="journal article" date="2001" name="J. Biol. Chem.">
        <title>Physical and functional interactions between Zic and Gli proteins.</title>
        <authorList>
            <person name="Koyabu Y."/>
            <person name="Nakata K."/>
            <person name="Mizugishi K."/>
            <person name="Aruga J."/>
            <person name="Mikoshiba K."/>
        </authorList>
    </citation>
    <scope>FUNCTION</scope>
    <scope>INTERACTION WITH GLI1; GLI2 AND GLI3</scope>
    <scope>SUBCELLULAR LOCATION</scope>
</reference>
<reference key="7">
    <citation type="journal article" date="2002" name="Dev. Biol.">
        <title>Zic1 promotes the expansion of dorsal neural progenitors in spinal cord by inhibiting neuronal differentiation.</title>
        <authorList>
            <person name="Aruga J."/>
            <person name="Tohmonda T."/>
            <person name="Homma S."/>
            <person name="Mikoshiba K."/>
        </authorList>
    </citation>
    <scope>FUNCTION</scope>
    <scope>DISRUPTION PHENOTYPE</scope>
    <scope>DEVELOPMENTAL STAGE</scope>
</reference>
<reference key="8">
    <citation type="journal article" date="2004" name="Biochem. Biophys. Res. Commun.">
        <title>Myogenic repressor I-mfa interferes with the function of Zic family proteins.</title>
        <authorList>
            <person name="Mizugishi K."/>
            <person name="Hatayama M."/>
            <person name="Tohmonda T."/>
            <person name="Ogawa M."/>
            <person name="Inoue T."/>
            <person name="Mikoshiba K."/>
            <person name="Aruga J."/>
        </authorList>
    </citation>
    <scope>FUNCTION</scope>
    <scope>INTERACTION WITH MDFIC</scope>
    <scope>SUBCELLULAR LOCATION</scope>
</reference>
<reference key="9">
    <citation type="journal article" date="2009" name="Neuroscience">
        <title>Zic1 levels regulate mossy fiber neuron position and axon laterality choice in the ventral brain stem.</title>
        <authorList>
            <person name="Dipietrantonio H.J."/>
            <person name="Dymecki S.M."/>
        </authorList>
    </citation>
    <scope>FUNCTION</scope>
    <scope>TISSUE SPECIFICITY</scope>
</reference>
<reference key="10">
    <citation type="journal article" date="2010" name="FASEB J.">
        <title>Zic1 transcription factor in bone: neural developmental protein regulates mechanotransduction in osteocytes.</title>
        <authorList>
            <person name="Kalogeropoulos M."/>
            <person name="Varanasi S.S."/>
            <person name="Olstad O.K."/>
            <person name="Sanderson P."/>
            <person name="Gautvik V.T."/>
            <person name="Reppe S."/>
            <person name="Francis R.M."/>
            <person name="Gautvik K.M."/>
            <person name="Birch M.A."/>
            <person name="Datta H.K."/>
        </authorList>
    </citation>
    <scope>FUNCTION</scope>
    <scope>SUBCELLULAR LOCATION</scope>
    <scope>TISSUE SPECIFICITY</scope>
</reference>